<organism>
    <name type="scientific">Mycolicibacterium paratuberculosis (strain ATCC BAA-968 / K-10)</name>
    <name type="common">Mycobacterium paratuberculosis</name>
    <dbReference type="NCBI Taxonomy" id="262316"/>
    <lineage>
        <taxon>Bacteria</taxon>
        <taxon>Bacillati</taxon>
        <taxon>Actinomycetota</taxon>
        <taxon>Actinomycetes</taxon>
        <taxon>Mycobacteriales</taxon>
        <taxon>Mycobacteriaceae</taxon>
        <taxon>Mycobacterium</taxon>
        <taxon>Mycobacterium avium complex (MAC)</taxon>
    </lineage>
</organism>
<proteinExistence type="inferred from homology"/>
<sequence length="99" mass="10856">MNPINYLYLSALLFTIGAAGVLLRRNAIVMFMCVELMLNAVNLAFVTFARMHGHLDGQMIAFFTMVVAACEVVIGLAIIMTIFRTRKSASVDDANLLKG</sequence>
<feature type="chain" id="PRO_0000390130" description="NADH-quinone oxidoreductase subunit K">
    <location>
        <begin position="1"/>
        <end position="99"/>
    </location>
</feature>
<feature type="transmembrane region" description="Helical" evidence="1">
    <location>
        <begin position="3"/>
        <end position="23"/>
    </location>
</feature>
<feature type="transmembrane region" description="Helical" evidence="1">
    <location>
        <begin position="28"/>
        <end position="48"/>
    </location>
</feature>
<feature type="transmembrane region" description="Helical" evidence="1">
    <location>
        <begin position="59"/>
        <end position="79"/>
    </location>
</feature>
<protein>
    <recommendedName>
        <fullName evidence="1">NADH-quinone oxidoreductase subunit K</fullName>
        <ecNumber evidence="1">7.1.1.-</ecNumber>
    </recommendedName>
    <alternativeName>
        <fullName evidence="1">NADH dehydrogenase I subunit K</fullName>
    </alternativeName>
    <alternativeName>
        <fullName evidence="1">NDH-1 subunit K</fullName>
    </alternativeName>
</protein>
<reference key="1">
    <citation type="journal article" date="2005" name="Proc. Natl. Acad. Sci. U.S.A.">
        <title>The complete genome sequence of Mycobacterium avium subspecies paratuberculosis.</title>
        <authorList>
            <person name="Li L."/>
            <person name="Bannantine J.P."/>
            <person name="Zhang Q."/>
            <person name="Amonsin A."/>
            <person name="May B.J."/>
            <person name="Alt D."/>
            <person name="Banerji N."/>
            <person name="Kanjilal S."/>
            <person name="Kapur V."/>
        </authorList>
    </citation>
    <scope>NUCLEOTIDE SEQUENCE [LARGE SCALE GENOMIC DNA]</scope>
    <source>
        <strain>ATCC BAA-968 / K-10</strain>
    </source>
</reference>
<accession>Q73V05</accession>
<evidence type="ECO:0000255" key="1">
    <source>
        <dbReference type="HAMAP-Rule" id="MF_01456"/>
    </source>
</evidence>
<name>NUOK_MYCPA</name>
<comment type="function">
    <text evidence="1">NDH-1 shuttles electrons from NADH, via FMN and iron-sulfur (Fe-S) centers, to quinones in the respiratory chain. The immediate electron acceptor for the enzyme in this species is believed to be a menaquinone. Couples the redox reaction to proton translocation (for every two electrons transferred, four hydrogen ions are translocated across the cytoplasmic membrane), and thus conserves the redox energy in a proton gradient.</text>
</comment>
<comment type="catalytic activity">
    <reaction evidence="1">
        <text>a quinone + NADH + 5 H(+)(in) = a quinol + NAD(+) + 4 H(+)(out)</text>
        <dbReference type="Rhea" id="RHEA:57888"/>
        <dbReference type="ChEBI" id="CHEBI:15378"/>
        <dbReference type="ChEBI" id="CHEBI:24646"/>
        <dbReference type="ChEBI" id="CHEBI:57540"/>
        <dbReference type="ChEBI" id="CHEBI:57945"/>
        <dbReference type="ChEBI" id="CHEBI:132124"/>
    </reaction>
</comment>
<comment type="subunit">
    <text evidence="1">NDH-1 is composed of 14 different subunits. Subunits NuoA, H, J, K, L, M, N constitute the membrane sector of the complex.</text>
</comment>
<comment type="subcellular location">
    <subcellularLocation>
        <location evidence="1">Cell membrane</location>
        <topology evidence="1">Multi-pass membrane protein</topology>
    </subcellularLocation>
</comment>
<comment type="similarity">
    <text evidence="1">Belongs to the complex I subunit 4L family.</text>
</comment>
<keyword id="KW-1003">Cell membrane</keyword>
<keyword id="KW-0472">Membrane</keyword>
<keyword id="KW-0520">NAD</keyword>
<keyword id="KW-0874">Quinone</keyword>
<keyword id="KW-1185">Reference proteome</keyword>
<keyword id="KW-1278">Translocase</keyword>
<keyword id="KW-0812">Transmembrane</keyword>
<keyword id="KW-1133">Transmembrane helix</keyword>
<keyword id="KW-0813">Transport</keyword>
<dbReference type="EC" id="7.1.1.-" evidence="1"/>
<dbReference type="EMBL" id="AE016958">
    <property type="protein sequence ID" value="AAS05759.1"/>
    <property type="molecule type" value="Genomic_DNA"/>
</dbReference>
<dbReference type="RefSeq" id="WP_003874812.1">
    <property type="nucleotide sequence ID" value="NZ_CP106873.1"/>
</dbReference>
<dbReference type="SMR" id="Q73V05"/>
<dbReference type="STRING" id="262316.MAP_3211"/>
<dbReference type="GeneID" id="75271525"/>
<dbReference type="KEGG" id="mpa:MAP_3211"/>
<dbReference type="eggNOG" id="COG0713">
    <property type="taxonomic scope" value="Bacteria"/>
</dbReference>
<dbReference type="HOGENOM" id="CLU_144724_0_0_11"/>
<dbReference type="Proteomes" id="UP000000580">
    <property type="component" value="Chromosome"/>
</dbReference>
<dbReference type="GO" id="GO:0030964">
    <property type="term" value="C:NADH dehydrogenase complex"/>
    <property type="evidence" value="ECO:0007669"/>
    <property type="project" value="TreeGrafter"/>
</dbReference>
<dbReference type="GO" id="GO:0005886">
    <property type="term" value="C:plasma membrane"/>
    <property type="evidence" value="ECO:0007669"/>
    <property type="project" value="UniProtKB-SubCell"/>
</dbReference>
<dbReference type="GO" id="GO:0050136">
    <property type="term" value="F:NADH:ubiquinone reductase (non-electrogenic) activity"/>
    <property type="evidence" value="ECO:0007669"/>
    <property type="project" value="UniProtKB-UniRule"/>
</dbReference>
<dbReference type="GO" id="GO:0048038">
    <property type="term" value="F:quinone binding"/>
    <property type="evidence" value="ECO:0007669"/>
    <property type="project" value="UniProtKB-KW"/>
</dbReference>
<dbReference type="GO" id="GO:0042773">
    <property type="term" value="P:ATP synthesis coupled electron transport"/>
    <property type="evidence" value="ECO:0007669"/>
    <property type="project" value="InterPro"/>
</dbReference>
<dbReference type="FunFam" id="1.10.287.3510:FF:000001">
    <property type="entry name" value="NADH-quinone oxidoreductase subunit K"/>
    <property type="match status" value="1"/>
</dbReference>
<dbReference type="Gene3D" id="1.10.287.3510">
    <property type="match status" value="1"/>
</dbReference>
<dbReference type="HAMAP" id="MF_01456">
    <property type="entry name" value="NDH1_NuoK"/>
    <property type="match status" value="1"/>
</dbReference>
<dbReference type="InterPro" id="IPR001133">
    <property type="entry name" value="NADH_UbQ_OxRdtase_chain4L/K"/>
</dbReference>
<dbReference type="InterPro" id="IPR039428">
    <property type="entry name" value="NUOK/Mnh_C1-like"/>
</dbReference>
<dbReference type="NCBIfam" id="NF004320">
    <property type="entry name" value="PRK05715.1-2"/>
    <property type="match status" value="1"/>
</dbReference>
<dbReference type="NCBIfam" id="NF004321">
    <property type="entry name" value="PRK05715.1-3"/>
    <property type="match status" value="1"/>
</dbReference>
<dbReference type="PANTHER" id="PTHR11434:SF21">
    <property type="entry name" value="NADH DEHYDROGENASE SUBUNIT 4L-RELATED"/>
    <property type="match status" value="1"/>
</dbReference>
<dbReference type="PANTHER" id="PTHR11434">
    <property type="entry name" value="NADH-UBIQUINONE OXIDOREDUCTASE SUBUNIT ND4L"/>
    <property type="match status" value="1"/>
</dbReference>
<dbReference type="Pfam" id="PF00420">
    <property type="entry name" value="Oxidored_q2"/>
    <property type="match status" value="1"/>
</dbReference>
<gene>
    <name evidence="1" type="primary">nuoK</name>
    <name type="ordered locus">MAP_3211</name>
</gene>